<feature type="chain" id="PRO_0000269290" description="Large ribosomal subunit protein bL21">
    <location>
        <begin position="1"/>
        <end position="142"/>
    </location>
</feature>
<feature type="region of interest" description="Disordered" evidence="2">
    <location>
        <begin position="74"/>
        <end position="142"/>
    </location>
</feature>
<feature type="compositionally biased region" description="Basic residues" evidence="2">
    <location>
        <begin position="74"/>
        <end position="84"/>
    </location>
</feature>
<feature type="compositionally biased region" description="Basic and acidic residues" evidence="2">
    <location>
        <begin position="107"/>
        <end position="125"/>
    </location>
</feature>
<feature type="compositionally biased region" description="Basic residues" evidence="2">
    <location>
        <begin position="126"/>
        <end position="135"/>
    </location>
</feature>
<name>RL21_BRUA2</name>
<protein>
    <recommendedName>
        <fullName evidence="1">Large ribosomal subunit protein bL21</fullName>
    </recommendedName>
    <alternativeName>
        <fullName evidence="3">50S ribosomal protein L21</fullName>
    </alternativeName>
</protein>
<comment type="function">
    <text evidence="1">This protein binds to 23S rRNA in the presence of protein L20.</text>
</comment>
<comment type="subunit">
    <text evidence="1">Part of the 50S ribosomal subunit. Contacts protein L20.</text>
</comment>
<comment type="similarity">
    <text evidence="1">Belongs to the bacterial ribosomal protein bL21 family.</text>
</comment>
<reference key="1">
    <citation type="journal article" date="2005" name="Infect. Immun.">
        <title>Whole-genome analyses of speciation events in pathogenic Brucellae.</title>
        <authorList>
            <person name="Chain P.S."/>
            <person name="Comerci D.J."/>
            <person name="Tolmasky M.E."/>
            <person name="Larimer F.W."/>
            <person name="Malfatti S.A."/>
            <person name="Vergez L.M."/>
            <person name="Aguero F."/>
            <person name="Land M.L."/>
            <person name="Ugalde R.A."/>
            <person name="Garcia E."/>
        </authorList>
    </citation>
    <scope>NUCLEOTIDE SEQUENCE [LARGE SCALE GENOMIC DNA]</scope>
    <source>
        <strain>2308</strain>
    </source>
</reference>
<dbReference type="EMBL" id="AM040264">
    <property type="protein sequence ID" value="CAJ11814.1"/>
    <property type="molecule type" value="Genomic_DNA"/>
</dbReference>
<dbReference type="RefSeq" id="WP_002966978.1">
    <property type="nucleotide sequence ID" value="NZ_KN046823.1"/>
</dbReference>
<dbReference type="SMR" id="Q2YLL7"/>
<dbReference type="STRING" id="359391.BAB1_1858"/>
<dbReference type="GeneID" id="93017813"/>
<dbReference type="KEGG" id="bmf:BAB1_1858"/>
<dbReference type="PATRIC" id="fig|359391.11.peg.373"/>
<dbReference type="HOGENOM" id="CLU_061463_1_1_5"/>
<dbReference type="PhylomeDB" id="Q2YLL7"/>
<dbReference type="Proteomes" id="UP000002719">
    <property type="component" value="Chromosome I"/>
</dbReference>
<dbReference type="GO" id="GO:0005737">
    <property type="term" value="C:cytoplasm"/>
    <property type="evidence" value="ECO:0007669"/>
    <property type="project" value="UniProtKB-ARBA"/>
</dbReference>
<dbReference type="GO" id="GO:1990904">
    <property type="term" value="C:ribonucleoprotein complex"/>
    <property type="evidence" value="ECO:0007669"/>
    <property type="project" value="UniProtKB-KW"/>
</dbReference>
<dbReference type="GO" id="GO:0005840">
    <property type="term" value="C:ribosome"/>
    <property type="evidence" value="ECO:0007669"/>
    <property type="project" value="UniProtKB-KW"/>
</dbReference>
<dbReference type="GO" id="GO:0019843">
    <property type="term" value="F:rRNA binding"/>
    <property type="evidence" value="ECO:0007669"/>
    <property type="project" value="UniProtKB-UniRule"/>
</dbReference>
<dbReference type="GO" id="GO:0003735">
    <property type="term" value="F:structural constituent of ribosome"/>
    <property type="evidence" value="ECO:0007669"/>
    <property type="project" value="InterPro"/>
</dbReference>
<dbReference type="GO" id="GO:0006412">
    <property type="term" value="P:translation"/>
    <property type="evidence" value="ECO:0007669"/>
    <property type="project" value="UniProtKB-UniRule"/>
</dbReference>
<dbReference type="HAMAP" id="MF_01363">
    <property type="entry name" value="Ribosomal_bL21"/>
    <property type="match status" value="1"/>
</dbReference>
<dbReference type="InterPro" id="IPR028909">
    <property type="entry name" value="bL21-like"/>
</dbReference>
<dbReference type="InterPro" id="IPR036164">
    <property type="entry name" value="bL21-like_sf"/>
</dbReference>
<dbReference type="InterPro" id="IPR001787">
    <property type="entry name" value="Ribosomal_bL21"/>
</dbReference>
<dbReference type="NCBIfam" id="TIGR00061">
    <property type="entry name" value="L21"/>
    <property type="match status" value="1"/>
</dbReference>
<dbReference type="PANTHER" id="PTHR21349">
    <property type="entry name" value="50S RIBOSOMAL PROTEIN L21"/>
    <property type="match status" value="1"/>
</dbReference>
<dbReference type="PANTHER" id="PTHR21349:SF0">
    <property type="entry name" value="LARGE RIBOSOMAL SUBUNIT PROTEIN BL21M"/>
    <property type="match status" value="1"/>
</dbReference>
<dbReference type="Pfam" id="PF00829">
    <property type="entry name" value="Ribosomal_L21p"/>
    <property type="match status" value="1"/>
</dbReference>
<dbReference type="SUPFAM" id="SSF141091">
    <property type="entry name" value="L21p-like"/>
    <property type="match status" value="1"/>
</dbReference>
<sequence length="142" mass="15067">MFAVIKTGGKQYRVAANDLIKVEKVAGEAGDIVEFAEVLMVGSTIGAPTVAGSLVTAEVVEQGRGRKVIAFKKRRRQNSKRTRGHRQELTTIRISEILTDGAKPSKKAAEKKAPKADAAEGEAAKPKKAAPKKAATKAESAE</sequence>
<gene>
    <name evidence="1" type="primary">rplU</name>
    <name type="ordered locus">BAB1_1858</name>
</gene>
<organism>
    <name type="scientific">Brucella abortus (strain 2308)</name>
    <dbReference type="NCBI Taxonomy" id="359391"/>
    <lineage>
        <taxon>Bacteria</taxon>
        <taxon>Pseudomonadati</taxon>
        <taxon>Pseudomonadota</taxon>
        <taxon>Alphaproteobacteria</taxon>
        <taxon>Hyphomicrobiales</taxon>
        <taxon>Brucellaceae</taxon>
        <taxon>Brucella/Ochrobactrum group</taxon>
        <taxon>Brucella</taxon>
    </lineage>
</organism>
<accession>Q2YLL7</accession>
<proteinExistence type="inferred from homology"/>
<evidence type="ECO:0000255" key="1">
    <source>
        <dbReference type="HAMAP-Rule" id="MF_01363"/>
    </source>
</evidence>
<evidence type="ECO:0000256" key="2">
    <source>
        <dbReference type="SAM" id="MobiDB-lite"/>
    </source>
</evidence>
<evidence type="ECO:0000305" key="3"/>
<keyword id="KW-1185">Reference proteome</keyword>
<keyword id="KW-0687">Ribonucleoprotein</keyword>
<keyword id="KW-0689">Ribosomal protein</keyword>
<keyword id="KW-0694">RNA-binding</keyword>
<keyword id="KW-0699">rRNA-binding</keyword>